<comment type="function">
    <text evidence="1">Specifically catalyzes the dephosphorylation of 2-phosphoglycolate.</text>
</comment>
<comment type="catalytic activity">
    <reaction>
        <text>2-phosphoglycolate + H2O = glycolate + phosphate</text>
        <dbReference type="Rhea" id="RHEA:14369"/>
        <dbReference type="ChEBI" id="CHEBI:15377"/>
        <dbReference type="ChEBI" id="CHEBI:29805"/>
        <dbReference type="ChEBI" id="CHEBI:43474"/>
        <dbReference type="ChEBI" id="CHEBI:58033"/>
        <dbReference type="EC" id="3.1.3.18"/>
    </reaction>
</comment>
<comment type="cofactor">
    <cofactor evidence="1">
        <name>Mg(2+)</name>
        <dbReference type="ChEBI" id="CHEBI:18420"/>
    </cofactor>
</comment>
<comment type="pathway">
    <text>Organic acid metabolism; glycolate biosynthesis; glycolate from 2-phosphoglycolate: step 1/1.</text>
</comment>
<comment type="similarity">
    <text evidence="2">Belongs to the HAD-like hydrolase superfamily. CbbY/CbbZ/Gph/YieH family.</text>
</comment>
<comment type="sequence caution" evidence="2">
    <conflict type="erroneous initiation">
        <sequence resource="EMBL-CDS" id="ABB58643"/>
    </conflict>
    <text>Extended N-terminus.</text>
</comment>
<proteinExistence type="inferred from homology"/>
<protein>
    <recommendedName>
        <fullName>Phosphoglycolate phosphatase</fullName>
        <shortName>PGP</shortName>
        <shortName>PGPase</shortName>
        <ecNumber>3.1.3.18</ecNumber>
    </recommendedName>
</protein>
<reference key="1">
    <citation type="journal article" date="1996" name="Gene">
        <title>An unusual gene arrangement for the putative chromosome replication origin and circadian expression of dnaN in Synechococcus sp. strain PCC 7942.</title>
        <authorList>
            <person name="Liu Y."/>
            <person name="Tsinoremas N.F."/>
        </authorList>
    </citation>
    <scope>NUCLEOTIDE SEQUENCE [GENOMIC DNA]</scope>
</reference>
<reference key="2">
    <citation type="submission" date="2005-08" db="EMBL/GenBank/DDBJ databases">
        <title>Complete sequence of chromosome 1 of Synechococcus elongatus PCC 7942.</title>
        <authorList>
            <consortium name="US DOE Joint Genome Institute"/>
            <person name="Copeland A."/>
            <person name="Lucas S."/>
            <person name="Lapidus A."/>
            <person name="Barry K."/>
            <person name="Detter J.C."/>
            <person name="Glavina T."/>
            <person name="Hammon N."/>
            <person name="Israni S."/>
            <person name="Pitluck S."/>
            <person name="Schmutz J."/>
            <person name="Larimer F."/>
            <person name="Land M."/>
            <person name="Kyrpides N."/>
            <person name="Lykidis A."/>
            <person name="Golden S."/>
            <person name="Richardson P."/>
        </authorList>
    </citation>
    <scope>NUCLEOTIDE SEQUENCE [LARGE SCALE GENOMIC DNA]</scope>
    <source>
        <strain>ATCC 33912 / PCC 7942 / FACHB-805</strain>
    </source>
</reference>
<accession>Q55039</accession>
<accession>Q31JX6</accession>
<evidence type="ECO:0000250" key="1"/>
<evidence type="ECO:0000305" key="2"/>
<sequence>MQAIIFDFDGTLVDSLPTVVAIANAHAPDFGYDPIDERDYAQLRQWSSRTIVRRAGLSPWQQARLLQRVQRQLGDCLPALQLFPGVADLLAQLRSRSLCLGILSSNSRQNIEAFLQRQGLRSLFSVVQAGTPILSKRRALSQLVAREGWQPAAVMYVGDETRDVEAARQVGLIAVAVTWGFNDRQSLVAACPDWLLETPSDLLQAVTQLMRQ</sequence>
<dbReference type="EC" id="3.1.3.18"/>
<dbReference type="EMBL" id="U33322">
    <property type="protein sequence ID" value="AAA75108.1"/>
    <property type="molecule type" value="Genomic_DNA"/>
</dbReference>
<dbReference type="EMBL" id="CP000100">
    <property type="protein sequence ID" value="ABB58643.1"/>
    <property type="status" value="ALT_INIT"/>
    <property type="molecule type" value="Genomic_DNA"/>
</dbReference>
<dbReference type="SMR" id="Q55039"/>
<dbReference type="STRING" id="1140.Synpcc7942_2613"/>
<dbReference type="PaxDb" id="1140-Synpcc7942_2613"/>
<dbReference type="KEGG" id="syf:Synpcc7942_2613"/>
<dbReference type="eggNOG" id="COG0546">
    <property type="taxonomic scope" value="Bacteria"/>
</dbReference>
<dbReference type="HOGENOM" id="CLU_045011_19_3_3"/>
<dbReference type="BioCyc" id="SYNEL:SYNPCC7942_2613-MONOMER"/>
<dbReference type="UniPathway" id="UPA00865">
    <property type="reaction ID" value="UER00834"/>
</dbReference>
<dbReference type="Proteomes" id="UP000889800">
    <property type="component" value="Chromosome"/>
</dbReference>
<dbReference type="GO" id="GO:0005829">
    <property type="term" value="C:cytosol"/>
    <property type="evidence" value="ECO:0007669"/>
    <property type="project" value="TreeGrafter"/>
</dbReference>
<dbReference type="GO" id="GO:0046872">
    <property type="term" value="F:metal ion binding"/>
    <property type="evidence" value="ECO:0007669"/>
    <property type="project" value="UniProtKB-KW"/>
</dbReference>
<dbReference type="GO" id="GO:0008967">
    <property type="term" value="F:phosphoglycolate phosphatase activity"/>
    <property type="evidence" value="ECO:0007669"/>
    <property type="project" value="UniProtKB-EC"/>
</dbReference>
<dbReference type="GO" id="GO:0006281">
    <property type="term" value="P:DNA repair"/>
    <property type="evidence" value="ECO:0007669"/>
    <property type="project" value="TreeGrafter"/>
</dbReference>
<dbReference type="GO" id="GO:0046295">
    <property type="term" value="P:glycolate biosynthetic process"/>
    <property type="evidence" value="ECO:0007669"/>
    <property type="project" value="UniProtKB-UniPathway"/>
</dbReference>
<dbReference type="GO" id="GO:0019253">
    <property type="term" value="P:reductive pentose-phosphate cycle"/>
    <property type="evidence" value="ECO:0007669"/>
    <property type="project" value="UniProtKB-KW"/>
</dbReference>
<dbReference type="CDD" id="cd04303">
    <property type="entry name" value="HAD_PGPase"/>
    <property type="match status" value="1"/>
</dbReference>
<dbReference type="Gene3D" id="3.40.50.1000">
    <property type="entry name" value="HAD superfamily/HAD-like"/>
    <property type="match status" value="1"/>
</dbReference>
<dbReference type="Gene3D" id="1.10.150.240">
    <property type="entry name" value="Putative phosphatase, domain 2"/>
    <property type="match status" value="1"/>
</dbReference>
<dbReference type="InterPro" id="IPR050155">
    <property type="entry name" value="HAD-like_hydrolase_sf"/>
</dbReference>
<dbReference type="InterPro" id="IPR036412">
    <property type="entry name" value="HAD-like_sf"/>
</dbReference>
<dbReference type="InterPro" id="IPR006439">
    <property type="entry name" value="HAD-SF_hydro_IA"/>
</dbReference>
<dbReference type="InterPro" id="IPR041492">
    <property type="entry name" value="HAD_2"/>
</dbReference>
<dbReference type="InterPro" id="IPR023214">
    <property type="entry name" value="HAD_sf"/>
</dbReference>
<dbReference type="InterPro" id="IPR023198">
    <property type="entry name" value="PGP-like_dom2"/>
</dbReference>
<dbReference type="NCBIfam" id="TIGR01549">
    <property type="entry name" value="HAD-SF-IA-v1"/>
    <property type="match status" value="1"/>
</dbReference>
<dbReference type="NCBIfam" id="NF009699">
    <property type="entry name" value="PRK13225.1"/>
    <property type="match status" value="1"/>
</dbReference>
<dbReference type="PANTHER" id="PTHR43434">
    <property type="entry name" value="PHOSPHOGLYCOLATE PHOSPHATASE"/>
    <property type="match status" value="1"/>
</dbReference>
<dbReference type="PANTHER" id="PTHR43434:SF13">
    <property type="entry name" value="PHOSPHOGLYCOLATE PHOSPHATASE"/>
    <property type="match status" value="1"/>
</dbReference>
<dbReference type="Pfam" id="PF13419">
    <property type="entry name" value="HAD_2"/>
    <property type="match status" value="1"/>
</dbReference>
<dbReference type="SFLD" id="SFLDG01129">
    <property type="entry name" value="C1.5:_HAD__Beta-PGM__Phosphata"/>
    <property type="match status" value="1"/>
</dbReference>
<dbReference type="SFLD" id="SFLDS00003">
    <property type="entry name" value="Haloacid_Dehalogenase"/>
    <property type="match status" value="1"/>
</dbReference>
<dbReference type="SUPFAM" id="SSF56784">
    <property type="entry name" value="HAD-like"/>
    <property type="match status" value="1"/>
</dbReference>
<organism>
    <name type="scientific">Synechococcus elongatus (strain ATCC 33912 / PCC 7942 / FACHB-805)</name>
    <name type="common">Anacystis nidulans R2</name>
    <dbReference type="NCBI Taxonomy" id="1140"/>
    <lineage>
        <taxon>Bacteria</taxon>
        <taxon>Bacillati</taxon>
        <taxon>Cyanobacteriota</taxon>
        <taxon>Cyanophyceae</taxon>
        <taxon>Synechococcales</taxon>
        <taxon>Synechococcaceae</taxon>
        <taxon>Synechococcus</taxon>
    </lineage>
</organism>
<feature type="chain" id="PRO_0000108042" description="Phosphoglycolate phosphatase">
    <location>
        <begin position="1"/>
        <end position="212"/>
    </location>
</feature>
<feature type="active site" description="Nucleophile" evidence="1">
    <location>
        <position position="7"/>
    </location>
</feature>
<feature type="binding site" evidence="1">
    <location>
        <position position="7"/>
    </location>
    <ligand>
        <name>Mg(2+)</name>
        <dbReference type="ChEBI" id="CHEBI:18420"/>
    </ligand>
</feature>
<feature type="binding site" evidence="1">
    <location>
        <position position="9"/>
    </location>
    <ligand>
        <name>Mg(2+)</name>
        <dbReference type="ChEBI" id="CHEBI:18420"/>
    </ligand>
</feature>
<feature type="binding site" evidence="1">
    <location>
        <position position="159"/>
    </location>
    <ligand>
        <name>Mg(2+)</name>
        <dbReference type="ChEBI" id="CHEBI:18420"/>
    </ligand>
</feature>
<feature type="sequence conflict" description="In Ref. 1; AAA75108." evidence="2" ref="1">
    <original>V</original>
    <variation>D</variation>
    <location>
        <position position="157"/>
    </location>
</feature>
<gene>
    <name type="primary">cbbZ</name>
    <name type="ordered locus">Synpcc7942_2613</name>
</gene>
<name>GPH_SYNE7</name>
<keyword id="KW-0113">Calvin cycle</keyword>
<keyword id="KW-0119">Carbohydrate metabolism</keyword>
<keyword id="KW-0378">Hydrolase</keyword>
<keyword id="KW-0460">Magnesium</keyword>
<keyword id="KW-0479">Metal-binding</keyword>
<keyword id="KW-0602">Photosynthesis</keyword>
<keyword id="KW-1185">Reference proteome</keyword>